<organism>
    <name type="scientific">Staphylococcus haemolyticus (strain JCSC1435)</name>
    <dbReference type="NCBI Taxonomy" id="279808"/>
    <lineage>
        <taxon>Bacteria</taxon>
        <taxon>Bacillati</taxon>
        <taxon>Bacillota</taxon>
        <taxon>Bacilli</taxon>
        <taxon>Bacillales</taxon>
        <taxon>Staphylococcaceae</taxon>
        <taxon>Staphylococcus</taxon>
    </lineage>
</organism>
<gene>
    <name evidence="1" type="primary">nagB</name>
    <name type="ordered locus">SH0278</name>
</gene>
<accession>Q4L9T8</accession>
<dbReference type="EC" id="3.5.99.6" evidence="1"/>
<dbReference type="EMBL" id="AP006716">
    <property type="protein sequence ID" value="BAE03587.1"/>
    <property type="molecule type" value="Genomic_DNA"/>
</dbReference>
<dbReference type="RefSeq" id="WP_011274607.1">
    <property type="nucleotide sequence ID" value="NC_007168.1"/>
</dbReference>
<dbReference type="SMR" id="Q4L9T8"/>
<dbReference type="GeneID" id="93779702"/>
<dbReference type="KEGG" id="sha:SH0278"/>
<dbReference type="eggNOG" id="COG0363">
    <property type="taxonomic scope" value="Bacteria"/>
</dbReference>
<dbReference type="HOGENOM" id="CLU_049611_1_1_9"/>
<dbReference type="OrthoDB" id="9791139at2"/>
<dbReference type="UniPathway" id="UPA00629">
    <property type="reaction ID" value="UER00684"/>
</dbReference>
<dbReference type="Proteomes" id="UP000000543">
    <property type="component" value="Chromosome"/>
</dbReference>
<dbReference type="GO" id="GO:0005737">
    <property type="term" value="C:cytoplasm"/>
    <property type="evidence" value="ECO:0007669"/>
    <property type="project" value="TreeGrafter"/>
</dbReference>
<dbReference type="GO" id="GO:0004342">
    <property type="term" value="F:glucosamine-6-phosphate deaminase activity"/>
    <property type="evidence" value="ECO:0007669"/>
    <property type="project" value="UniProtKB-UniRule"/>
</dbReference>
<dbReference type="GO" id="GO:0042802">
    <property type="term" value="F:identical protein binding"/>
    <property type="evidence" value="ECO:0007669"/>
    <property type="project" value="TreeGrafter"/>
</dbReference>
<dbReference type="GO" id="GO:0005975">
    <property type="term" value="P:carbohydrate metabolic process"/>
    <property type="evidence" value="ECO:0007669"/>
    <property type="project" value="InterPro"/>
</dbReference>
<dbReference type="GO" id="GO:0006043">
    <property type="term" value="P:glucosamine catabolic process"/>
    <property type="evidence" value="ECO:0007669"/>
    <property type="project" value="TreeGrafter"/>
</dbReference>
<dbReference type="GO" id="GO:0006046">
    <property type="term" value="P:N-acetylglucosamine catabolic process"/>
    <property type="evidence" value="ECO:0007669"/>
    <property type="project" value="TreeGrafter"/>
</dbReference>
<dbReference type="GO" id="GO:0019262">
    <property type="term" value="P:N-acetylneuraminate catabolic process"/>
    <property type="evidence" value="ECO:0007669"/>
    <property type="project" value="UniProtKB-UniRule"/>
</dbReference>
<dbReference type="CDD" id="cd01399">
    <property type="entry name" value="GlcN6P_deaminase"/>
    <property type="match status" value="1"/>
</dbReference>
<dbReference type="FunFam" id="3.40.50.1360:FF:000003">
    <property type="entry name" value="Glucosamine-6-phosphate deaminase"/>
    <property type="match status" value="1"/>
</dbReference>
<dbReference type="Gene3D" id="3.40.50.1360">
    <property type="match status" value="1"/>
</dbReference>
<dbReference type="HAMAP" id="MF_01241">
    <property type="entry name" value="GlcN6P_deamin"/>
    <property type="match status" value="1"/>
</dbReference>
<dbReference type="InterPro" id="IPR006148">
    <property type="entry name" value="Glc/Gal-6P_isomerase"/>
</dbReference>
<dbReference type="InterPro" id="IPR004547">
    <property type="entry name" value="Glucosamine6P_isomerase"/>
</dbReference>
<dbReference type="InterPro" id="IPR037171">
    <property type="entry name" value="NagB/RpiA_transferase-like"/>
</dbReference>
<dbReference type="NCBIfam" id="TIGR00502">
    <property type="entry name" value="nagB"/>
    <property type="match status" value="1"/>
</dbReference>
<dbReference type="PANTHER" id="PTHR11280">
    <property type="entry name" value="GLUCOSAMINE-6-PHOSPHATE ISOMERASE"/>
    <property type="match status" value="1"/>
</dbReference>
<dbReference type="PANTHER" id="PTHR11280:SF5">
    <property type="entry name" value="GLUCOSAMINE-6-PHOSPHATE ISOMERASE"/>
    <property type="match status" value="1"/>
</dbReference>
<dbReference type="Pfam" id="PF01182">
    <property type="entry name" value="Glucosamine_iso"/>
    <property type="match status" value="1"/>
</dbReference>
<dbReference type="SUPFAM" id="SSF100950">
    <property type="entry name" value="NagB/RpiA/CoA transferase-like"/>
    <property type="match status" value="1"/>
</dbReference>
<protein>
    <recommendedName>
        <fullName evidence="1">Glucosamine-6-phosphate deaminase</fullName>
        <ecNumber evidence="1">3.5.99.6</ecNumber>
    </recommendedName>
    <alternativeName>
        <fullName evidence="1">GlcN6P deaminase</fullName>
        <shortName evidence="1">GNPDA</shortName>
    </alternativeName>
    <alternativeName>
        <fullName evidence="1">Glucosamine-6-phosphate isomerase</fullName>
    </alternativeName>
</protein>
<keyword id="KW-0119">Carbohydrate metabolism</keyword>
<keyword id="KW-0378">Hydrolase</keyword>
<reference key="1">
    <citation type="journal article" date="2005" name="J. Bacteriol.">
        <title>Whole-genome sequencing of Staphylococcus haemolyticus uncovers the extreme plasticity of its genome and the evolution of human-colonizing staphylococcal species.</title>
        <authorList>
            <person name="Takeuchi F."/>
            <person name="Watanabe S."/>
            <person name="Baba T."/>
            <person name="Yuzawa H."/>
            <person name="Ito T."/>
            <person name="Morimoto Y."/>
            <person name="Kuroda M."/>
            <person name="Cui L."/>
            <person name="Takahashi M."/>
            <person name="Ankai A."/>
            <person name="Baba S."/>
            <person name="Fukui S."/>
            <person name="Lee J.C."/>
            <person name="Hiramatsu K."/>
        </authorList>
    </citation>
    <scope>NUCLEOTIDE SEQUENCE [LARGE SCALE GENOMIC DNA]</scope>
    <source>
        <strain>JCSC1435</strain>
    </source>
</reference>
<sequence length="242" mass="27236">MKITNLVDKKLASDYVAIELLKLIKDKPDAILGLATGGTMTDVYPRFSELLSANHVDLANVQTFNLDEYVGLEPEHAQSYHTYMHQLLFDHNASWNADNIHIPQGHVDDLEREARRYENQLKQIGQPDIQLLGIGENGHIGFNEPGTSFESETRVVDLTESTINANSVHFDHIDDVPKQAVSMGLNSIMRAKRIILLAFGERKRDAIHQLLNGETNESLPASILHQHPNVEIIVDDTIFNRL</sequence>
<proteinExistence type="inferred from homology"/>
<feature type="chain" id="PRO_0000160170" description="Glucosamine-6-phosphate deaminase">
    <location>
        <begin position="1"/>
        <end position="242"/>
    </location>
</feature>
<feature type="active site" description="Proton acceptor; for enolization step" evidence="1">
    <location>
        <position position="67"/>
    </location>
</feature>
<feature type="active site" description="For ring-opening step" evidence="1">
    <location>
        <position position="137"/>
    </location>
</feature>
<feature type="active site" description="Proton acceptor; for ring-opening step" evidence="1">
    <location>
        <position position="139"/>
    </location>
</feature>
<feature type="active site" description="For ring-opening step" evidence="1">
    <location>
        <position position="144"/>
    </location>
</feature>
<name>NAGB_STAHJ</name>
<evidence type="ECO:0000255" key="1">
    <source>
        <dbReference type="HAMAP-Rule" id="MF_01241"/>
    </source>
</evidence>
<comment type="function">
    <text evidence="1">Catalyzes the reversible isomerization-deamination of glucosamine 6-phosphate (GlcN6P) to form fructose 6-phosphate (Fru6P) and ammonium ion.</text>
</comment>
<comment type="catalytic activity">
    <reaction evidence="1">
        <text>alpha-D-glucosamine 6-phosphate + H2O = beta-D-fructose 6-phosphate + NH4(+)</text>
        <dbReference type="Rhea" id="RHEA:12172"/>
        <dbReference type="ChEBI" id="CHEBI:15377"/>
        <dbReference type="ChEBI" id="CHEBI:28938"/>
        <dbReference type="ChEBI" id="CHEBI:57634"/>
        <dbReference type="ChEBI" id="CHEBI:75989"/>
        <dbReference type="EC" id="3.5.99.6"/>
    </reaction>
</comment>
<comment type="pathway">
    <text evidence="1">Amino-sugar metabolism; N-acetylneuraminate degradation; D-fructose 6-phosphate from N-acetylneuraminate: step 5/5.</text>
</comment>
<comment type="similarity">
    <text evidence="1">Belongs to the glucosamine/galactosamine-6-phosphate isomerase family. NagB subfamily.</text>
</comment>